<reference key="1">
    <citation type="journal article" date="2003" name="Lancet">
        <title>Genome sequence of Vibrio parahaemolyticus: a pathogenic mechanism distinct from that of V. cholerae.</title>
        <authorList>
            <person name="Makino K."/>
            <person name="Oshima K."/>
            <person name="Kurokawa K."/>
            <person name="Yokoyama K."/>
            <person name="Uda T."/>
            <person name="Tagomori K."/>
            <person name="Iijima Y."/>
            <person name="Najima M."/>
            <person name="Nakano M."/>
            <person name="Yamashita A."/>
            <person name="Kubota Y."/>
            <person name="Kimura S."/>
            <person name="Yasunaga T."/>
            <person name="Honda T."/>
            <person name="Shinagawa H."/>
            <person name="Hattori M."/>
            <person name="Iida T."/>
        </authorList>
    </citation>
    <scope>NUCLEOTIDE SEQUENCE [LARGE SCALE GENOMIC DNA]</scope>
    <source>
        <strain>RIMD 2210633</strain>
    </source>
</reference>
<organism>
    <name type="scientific">Vibrio parahaemolyticus serotype O3:K6 (strain RIMD 2210633)</name>
    <dbReference type="NCBI Taxonomy" id="223926"/>
    <lineage>
        <taxon>Bacteria</taxon>
        <taxon>Pseudomonadati</taxon>
        <taxon>Pseudomonadota</taxon>
        <taxon>Gammaproteobacteria</taxon>
        <taxon>Vibrionales</taxon>
        <taxon>Vibrionaceae</taxon>
        <taxon>Vibrio</taxon>
    </lineage>
</organism>
<gene>
    <name type="ordered locus">VP0646</name>
</gene>
<evidence type="ECO:0000255" key="1">
    <source>
        <dbReference type="HAMAP-Rule" id="MF_00460"/>
    </source>
</evidence>
<evidence type="ECO:0000256" key="2">
    <source>
        <dbReference type="SAM" id="MobiDB-lite"/>
    </source>
</evidence>
<sequence length="115" mass="12985">MSIESDMIHVEVVYALPHEQRVFNLVVNNHATVEEIIRQSGVLELYPEIDLAKNKVGVFSRNVKLDATVRDKDRIEIYRPLLADPKEIRRKRAEQAKAAGNADPVTGGKPNALRK</sequence>
<accession>Q87RY0</accession>
<proteinExistence type="inferred from homology"/>
<dbReference type="EMBL" id="BA000031">
    <property type="protein sequence ID" value="BAC58909.1"/>
    <property type="molecule type" value="Genomic_DNA"/>
</dbReference>
<dbReference type="RefSeq" id="NP_797025.1">
    <property type="nucleotide sequence ID" value="NC_004603.1"/>
</dbReference>
<dbReference type="RefSeq" id="WP_005456005.1">
    <property type="nucleotide sequence ID" value="NC_004603.1"/>
</dbReference>
<dbReference type="SMR" id="Q87RY0"/>
<dbReference type="GeneID" id="1188121"/>
<dbReference type="KEGG" id="vpa:VP0646"/>
<dbReference type="PATRIC" id="fig|223926.6.peg.615"/>
<dbReference type="eggNOG" id="COG2914">
    <property type="taxonomic scope" value="Bacteria"/>
</dbReference>
<dbReference type="HOGENOM" id="CLU_150721_1_0_6"/>
<dbReference type="Proteomes" id="UP000002493">
    <property type="component" value="Chromosome 1"/>
</dbReference>
<dbReference type="Gene3D" id="3.10.20.280">
    <property type="entry name" value="RnfH-like"/>
    <property type="match status" value="1"/>
</dbReference>
<dbReference type="HAMAP" id="MF_00460">
    <property type="entry name" value="UPF0125_RnfH"/>
    <property type="match status" value="1"/>
</dbReference>
<dbReference type="InterPro" id="IPR016155">
    <property type="entry name" value="Mopterin_synth/thiamin_S_b"/>
</dbReference>
<dbReference type="InterPro" id="IPR005346">
    <property type="entry name" value="RnfH"/>
</dbReference>
<dbReference type="InterPro" id="IPR037021">
    <property type="entry name" value="RnfH_sf"/>
</dbReference>
<dbReference type="NCBIfam" id="NF002490">
    <property type="entry name" value="PRK01777.1"/>
    <property type="match status" value="1"/>
</dbReference>
<dbReference type="PANTHER" id="PTHR37483">
    <property type="entry name" value="UPF0125 PROTEIN RATB"/>
    <property type="match status" value="1"/>
</dbReference>
<dbReference type="PANTHER" id="PTHR37483:SF1">
    <property type="entry name" value="UPF0125 PROTEIN RATB"/>
    <property type="match status" value="1"/>
</dbReference>
<dbReference type="Pfam" id="PF03658">
    <property type="entry name" value="Ub-RnfH"/>
    <property type="match status" value="1"/>
</dbReference>
<dbReference type="SUPFAM" id="SSF54285">
    <property type="entry name" value="MoaD/ThiS"/>
    <property type="match status" value="1"/>
</dbReference>
<comment type="similarity">
    <text evidence="1">Belongs to the UPF0125 (RnfH) family.</text>
</comment>
<feature type="chain" id="PRO_0000192503" description="UPF0125 protein VP0646">
    <location>
        <begin position="1"/>
        <end position="115"/>
    </location>
</feature>
<feature type="region of interest" description="Disordered" evidence="2">
    <location>
        <begin position="92"/>
        <end position="115"/>
    </location>
</feature>
<protein>
    <recommendedName>
        <fullName evidence="1">UPF0125 protein VP0646</fullName>
    </recommendedName>
</protein>
<name>Y646_VIBPA</name>